<accession>Q5Z5B2</accession>
<accession>A0A0P0X188</accession>
<protein>
    <recommendedName>
        <fullName>Protein argonaute 1D</fullName>
        <shortName>OsAGO1d</shortName>
    </recommendedName>
</protein>
<reference key="1">
    <citation type="journal article" date="2005" name="Nature">
        <title>The map-based sequence of the rice genome.</title>
        <authorList>
            <consortium name="International rice genome sequencing project (IRGSP)"/>
        </authorList>
    </citation>
    <scope>NUCLEOTIDE SEQUENCE [LARGE SCALE GENOMIC DNA]</scope>
    <source>
        <strain>cv. Nipponbare</strain>
    </source>
</reference>
<reference key="2">
    <citation type="journal article" date="2008" name="Nucleic Acids Res.">
        <title>The rice annotation project database (RAP-DB): 2008 update.</title>
        <authorList>
            <consortium name="The rice annotation project (RAP)"/>
        </authorList>
    </citation>
    <scope>GENOME REANNOTATION</scope>
    <source>
        <strain>cv. Nipponbare</strain>
    </source>
</reference>
<reference key="3">
    <citation type="journal article" date="2013" name="Rice">
        <title>Improvement of the Oryza sativa Nipponbare reference genome using next generation sequence and optical map data.</title>
        <authorList>
            <person name="Kawahara Y."/>
            <person name="de la Bastide M."/>
            <person name="Hamilton J.P."/>
            <person name="Kanamori H."/>
            <person name="McCombie W.R."/>
            <person name="Ouyang S."/>
            <person name="Schwartz D.C."/>
            <person name="Tanaka T."/>
            <person name="Wu J."/>
            <person name="Zhou S."/>
            <person name="Childs K.L."/>
            <person name="Davidson R.M."/>
            <person name="Lin H."/>
            <person name="Quesada-Ocampo L."/>
            <person name="Vaillancourt B."/>
            <person name="Sakai H."/>
            <person name="Lee S.S."/>
            <person name="Kim J."/>
            <person name="Numa H."/>
            <person name="Itoh T."/>
            <person name="Buell C.R."/>
            <person name="Matsumoto T."/>
        </authorList>
    </citation>
    <scope>GENOME REANNOTATION</scope>
    <source>
        <strain>cv. Nipponbare</strain>
    </source>
</reference>
<reference key="4">
    <citation type="journal article" date="2003" name="Science">
        <title>Collection, mapping, and annotation of over 28,000 cDNA clones from japonica rice.</title>
        <authorList>
            <consortium name="The rice full-length cDNA consortium"/>
        </authorList>
    </citation>
    <scope>NUCLEOTIDE SEQUENCE [LARGE SCALE MRNA]</scope>
    <source>
        <strain>cv. Nipponbare</strain>
    </source>
</reference>
<reference key="5">
    <citation type="journal article" date="2008" name="BMC Genomics">
        <title>Genome-wide identification, organization and phylogenetic analysis of dicer-like, argonaute and RNA-dependent RNA polymerase gene families and their expression analysis during reproductive development and stress in rice.</title>
        <authorList>
            <person name="Kapoor M."/>
            <person name="Arora R."/>
            <person name="Lama T."/>
            <person name="Nijhawan A."/>
            <person name="Khurana J.P."/>
            <person name="Tyagi A.K."/>
            <person name="Kapoor S."/>
        </authorList>
    </citation>
    <scope>GENE FAMILY</scope>
    <scope>NOMENCLATURE</scope>
</reference>
<comment type="function">
    <text evidence="1">Probably involved in the RNA silencing pathway. May bind to short RNAs such as microRNAs (miRNAs) or short interfering RNAs (siRNAs), and represses the translation of mRNAs which are complementary to them (By similarity).</text>
</comment>
<comment type="similarity">
    <text evidence="5">Belongs to the argonaute family. Ago subfamily.</text>
</comment>
<name>AGO1D_ORYSJ</name>
<dbReference type="EMBL" id="AP005750">
    <property type="protein sequence ID" value="BAD62111.1"/>
    <property type="molecule type" value="Genomic_DNA"/>
</dbReference>
<dbReference type="EMBL" id="AP008212">
    <property type="protein sequence ID" value="BAF20562.1"/>
    <property type="molecule type" value="Genomic_DNA"/>
</dbReference>
<dbReference type="EMBL" id="AP014962">
    <property type="protein sequence ID" value="BAS99632.1"/>
    <property type="molecule type" value="Genomic_DNA"/>
</dbReference>
<dbReference type="EMBL" id="AK111500">
    <property type="protein sequence ID" value="BAG99281.1"/>
    <property type="molecule type" value="mRNA"/>
</dbReference>
<dbReference type="RefSeq" id="XP_015642511.1">
    <property type="nucleotide sequence ID" value="XM_015787025.1"/>
</dbReference>
<dbReference type="RefSeq" id="XP_015642512.1">
    <property type="nucleotide sequence ID" value="XM_015787026.1"/>
</dbReference>
<dbReference type="SMR" id="Q5Z5B2"/>
<dbReference type="FunCoup" id="Q5Z5B2">
    <property type="interactions" value="1902"/>
</dbReference>
<dbReference type="STRING" id="39947.Q5Z5B2"/>
<dbReference type="PaxDb" id="39947-Q5Z5B2"/>
<dbReference type="EnsemblPlants" id="Os06t0729300-01">
    <property type="protein sequence ID" value="Os06t0729300-01"/>
    <property type="gene ID" value="Os06g0729300"/>
</dbReference>
<dbReference type="Gramene" id="Os06t0729300-01">
    <property type="protein sequence ID" value="Os06t0729300-01"/>
    <property type="gene ID" value="Os06g0729300"/>
</dbReference>
<dbReference type="KEGG" id="dosa:Os06g0729300"/>
<dbReference type="eggNOG" id="KOG1041">
    <property type="taxonomic scope" value="Eukaryota"/>
</dbReference>
<dbReference type="HOGENOM" id="CLU_004544_0_1_1"/>
<dbReference type="InParanoid" id="Q5Z5B2"/>
<dbReference type="OMA" id="MEGHIAN"/>
<dbReference type="OrthoDB" id="10252740at2759"/>
<dbReference type="Proteomes" id="UP000000763">
    <property type="component" value="Chromosome 6"/>
</dbReference>
<dbReference type="Proteomes" id="UP000059680">
    <property type="component" value="Chromosome 6"/>
</dbReference>
<dbReference type="ExpressionAtlas" id="Q5Z5B2">
    <property type="expression patterns" value="baseline and differential"/>
</dbReference>
<dbReference type="GO" id="GO:0005737">
    <property type="term" value="C:cytoplasm"/>
    <property type="evidence" value="ECO:0000318"/>
    <property type="project" value="GO_Central"/>
</dbReference>
<dbReference type="GO" id="GO:0005634">
    <property type="term" value="C:nucleus"/>
    <property type="evidence" value="ECO:0000318"/>
    <property type="project" value="GO_Central"/>
</dbReference>
<dbReference type="GO" id="GO:0003723">
    <property type="term" value="F:RNA binding"/>
    <property type="evidence" value="ECO:0000318"/>
    <property type="project" value="GO_Central"/>
</dbReference>
<dbReference type="GO" id="GO:0004521">
    <property type="term" value="F:RNA endonuclease activity"/>
    <property type="evidence" value="ECO:0000318"/>
    <property type="project" value="GO_Central"/>
</dbReference>
<dbReference type="GO" id="GO:0031047">
    <property type="term" value="P:regulatory ncRNA-mediated gene silencing"/>
    <property type="evidence" value="ECO:0000318"/>
    <property type="project" value="GO_Central"/>
</dbReference>
<dbReference type="CDD" id="cd02846">
    <property type="entry name" value="PAZ_argonaute_like"/>
    <property type="match status" value="1"/>
</dbReference>
<dbReference type="CDD" id="cd04657">
    <property type="entry name" value="Piwi_ago-like"/>
    <property type="match status" value="1"/>
</dbReference>
<dbReference type="FunFam" id="3.40.50.2300:FF:000110">
    <property type="entry name" value="Argonaute 10"/>
    <property type="match status" value="1"/>
</dbReference>
<dbReference type="FunFam" id="3.30.420.10:FF:000013">
    <property type="entry name" value="protein argonaute 10-like"/>
    <property type="match status" value="1"/>
</dbReference>
<dbReference type="FunFam" id="2.170.260.10:FF:000001">
    <property type="entry name" value="Protein argonaute-2"/>
    <property type="match status" value="1"/>
</dbReference>
<dbReference type="Gene3D" id="3.40.50.2300">
    <property type="match status" value="1"/>
</dbReference>
<dbReference type="Gene3D" id="2.170.260.10">
    <property type="entry name" value="paz domain"/>
    <property type="match status" value="1"/>
</dbReference>
<dbReference type="Gene3D" id="3.30.420.10">
    <property type="entry name" value="Ribonuclease H-like superfamily/Ribonuclease H"/>
    <property type="match status" value="1"/>
</dbReference>
<dbReference type="InterPro" id="IPR014811">
    <property type="entry name" value="ArgoL1"/>
</dbReference>
<dbReference type="InterPro" id="IPR032472">
    <property type="entry name" value="ArgoL2"/>
</dbReference>
<dbReference type="InterPro" id="IPR032473">
    <property type="entry name" value="Argonaute_Mid_dom"/>
</dbReference>
<dbReference type="InterPro" id="IPR032474">
    <property type="entry name" value="Argonaute_N"/>
</dbReference>
<dbReference type="InterPro" id="IPR003100">
    <property type="entry name" value="PAZ_dom"/>
</dbReference>
<dbReference type="InterPro" id="IPR036085">
    <property type="entry name" value="PAZ_dom_sf"/>
</dbReference>
<dbReference type="InterPro" id="IPR003165">
    <property type="entry name" value="Piwi"/>
</dbReference>
<dbReference type="InterPro" id="IPR045246">
    <property type="entry name" value="Piwi_ago-like"/>
</dbReference>
<dbReference type="InterPro" id="IPR012337">
    <property type="entry name" value="RNaseH-like_sf"/>
</dbReference>
<dbReference type="InterPro" id="IPR036397">
    <property type="entry name" value="RNaseH_sf"/>
</dbReference>
<dbReference type="PANTHER" id="PTHR22891">
    <property type="entry name" value="EUKARYOTIC TRANSLATION INITIATION FACTOR 2C"/>
    <property type="match status" value="1"/>
</dbReference>
<dbReference type="Pfam" id="PF08699">
    <property type="entry name" value="ArgoL1"/>
    <property type="match status" value="1"/>
</dbReference>
<dbReference type="Pfam" id="PF16488">
    <property type="entry name" value="ArgoL2"/>
    <property type="match status" value="1"/>
</dbReference>
<dbReference type="Pfam" id="PF16487">
    <property type="entry name" value="ArgoMid"/>
    <property type="match status" value="1"/>
</dbReference>
<dbReference type="Pfam" id="PF16486">
    <property type="entry name" value="ArgoN"/>
    <property type="match status" value="1"/>
</dbReference>
<dbReference type="Pfam" id="PF02170">
    <property type="entry name" value="PAZ"/>
    <property type="match status" value="1"/>
</dbReference>
<dbReference type="Pfam" id="PF02171">
    <property type="entry name" value="Piwi"/>
    <property type="match status" value="1"/>
</dbReference>
<dbReference type="SMART" id="SM01163">
    <property type="entry name" value="DUF1785"/>
    <property type="match status" value="1"/>
</dbReference>
<dbReference type="SMART" id="SM00949">
    <property type="entry name" value="PAZ"/>
    <property type="match status" value="1"/>
</dbReference>
<dbReference type="SMART" id="SM00950">
    <property type="entry name" value="Piwi"/>
    <property type="match status" value="1"/>
</dbReference>
<dbReference type="SUPFAM" id="SSF101690">
    <property type="entry name" value="PAZ domain"/>
    <property type="match status" value="1"/>
</dbReference>
<dbReference type="SUPFAM" id="SSF53098">
    <property type="entry name" value="Ribonuclease H-like"/>
    <property type="match status" value="1"/>
</dbReference>
<dbReference type="PROSITE" id="PS50821">
    <property type="entry name" value="PAZ"/>
    <property type="match status" value="1"/>
</dbReference>
<dbReference type="PROSITE" id="PS50822">
    <property type="entry name" value="PIWI"/>
    <property type="match status" value="1"/>
</dbReference>
<proteinExistence type="evidence at transcript level"/>
<gene>
    <name type="primary">AGO1D</name>
    <name type="ordered locus">Os06g0729300</name>
    <name type="ordered locus">LOC_Os06g51310</name>
    <name type="ORF">OSJNBa0069C14.10-1</name>
</gene>
<keyword id="KW-1185">Reference proteome</keyword>
<keyword id="KW-0943">RNA-mediated gene silencing</keyword>
<evidence type="ECO:0000250" key="1"/>
<evidence type="ECO:0000255" key="2">
    <source>
        <dbReference type="PROSITE-ProRule" id="PRU00142"/>
    </source>
</evidence>
<evidence type="ECO:0000255" key="3">
    <source>
        <dbReference type="PROSITE-ProRule" id="PRU00150"/>
    </source>
</evidence>
<evidence type="ECO:0000256" key="4">
    <source>
        <dbReference type="SAM" id="MobiDB-lite"/>
    </source>
</evidence>
<evidence type="ECO:0000305" key="5"/>
<feature type="chain" id="PRO_0000378428" description="Protein argonaute 1D">
    <location>
        <begin position="1"/>
        <end position="1038"/>
    </location>
</feature>
<feature type="domain" description="PAZ" evidence="2">
    <location>
        <begin position="380"/>
        <end position="493"/>
    </location>
</feature>
<feature type="domain" description="Piwi" evidence="3">
    <location>
        <begin position="669"/>
        <end position="990"/>
    </location>
</feature>
<feature type="region of interest" description="Disordered" evidence="4">
    <location>
        <begin position="1"/>
        <end position="58"/>
    </location>
</feature>
<feature type="region of interest" description="Disordered" evidence="4">
    <location>
        <begin position="110"/>
        <end position="134"/>
    </location>
</feature>
<feature type="region of interest" description="Disordered" evidence="4">
    <location>
        <begin position="992"/>
        <end position="1021"/>
    </location>
</feature>
<feature type="compositionally biased region" description="Gly residues" evidence="4">
    <location>
        <begin position="18"/>
        <end position="29"/>
    </location>
</feature>
<feature type="compositionally biased region" description="Gly residues" evidence="4">
    <location>
        <begin position="43"/>
        <end position="52"/>
    </location>
</feature>
<feature type="compositionally biased region" description="Low complexity" evidence="4">
    <location>
        <begin position="115"/>
        <end position="134"/>
    </location>
</feature>
<sequence length="1038" mass="115924">MGSRRPRLPGFGEDCEPRGGGRGGGGRGRGSYYPQAQQYHPQGHGGRGGAGYYHGAAPQPRGAMVVQQWRPATAAAEHLGHQQPYNSSVRPQHYYGPSAIAPELLQAMDAPHEPPANVSSPEAASPEASSPRSLALEVTEQLQDLSVQYQLSESQEEIVQHVPVSTKSFKFPHRPGSGSIGTRCLVKANHFFAQLPDKDLHQYDVSITPELTSRIRSRAVMEELVRLHKMSYLGGRLPAYDGRKSLYTAGPLPFTSKEFRISLLEEDDGSGSERRQKTYNVVIKFAARADLHRLEQFLAGRQAEAPQEALQVLDIVLRELPTARYAPFGRSFFSPDLGRRRSLGEGLETWRGFYQSIRPTQMGLSLNIDMSATAFFEPLPVIDFVIQLLNTDIRSRPLSDAERVKIKKALRGVKVGVTHRGNMRRKYRISGLTSQATRELTFPVDQGGTVKSVVQYFQETYGFAIQHTYLPCLQVGNQQRPNYLPMEVCKIVEGQRYSKRLNQNQIRALLEETCQRPHDRERDIIQMVNHNSYHEDPYAKEFGIKISERLALVEARILPAPRLKYNETGREKDCLPRVGQWNMMNKKMVNGGRVRSWICVNFARNVQESVASGFCRELARMCQASGMDFALEPVLPSMYARPDQVERALKARFHDAMNILGPQHKELDLLIGLLPDNNGSLYGDLKRICEIDLGLVSQCCCTKQVFKMNKQILANLALKINVKVGGRNTVLVDAVSRRIPLVTDRPTIIFGADVTHPHPGEDSSPSIAAVVASQDWPEVTKYAGLVSAQSHRQELIDDLYNITHDPHRGPICGGMVRELLISFKRSTGQKPQRIIFYRDGVSEGQFYQVLLHELDAIRKACASLEANYQPQVTFIVVQKRHHTRLFAHNHNDQNSVDRSGNILPGTVVDSKICHPTEFDFFLCSHAGIKGTSRPAHYHVLWDENNFTADALQTLTNNLCYTYARCTRSVSIVPPAYYAHLAAFRARFYMESDSSDSGSMASGRGGGSSTSRSTRAAGGGAVRPLPALKDSVKNVMFYC</sequence>
<organism>
    <name type="scientific">Oryza sativa subsp. japonica</name>
    <name type="common">Rice</name>
    <dbReference type="NCBI Taxonomy" id="39947"/>
    <lineage>
        <taxon>Eukaryota</taxon>
        <taxon>Viridiplantae</taxon>
        <taxon>Streptophyta</taxon>
        <taxon>Embryophyta</taxon>
        <taxon>Tracheophyta</taxon>
        <taxon>Spermatophyta</taxon>
        <taxon>Magnoliopsida</taxon>
        <taxon>Liliopsida</taxon>
        <taxon>Poales</taxon>
        <taxon>Poaceae</taxon>
        <taxon>BOP clade</taxon>
        <taxon>Oryzoideae</taxon>
        <taxon>Oryzeae</taxon>
        <taxon>Oryzinae</taxon>
        <taxon>Oryza</taxon>
        <taxon>Oryza sativa</taxon>
    </lineage>
</organism>